<proteinExistence type="inferred from homology"/>
<keyword id="KW-0963">Cytoplasm</keyword>
<keyword id="KW-0479">Metal-binding</keyword>
<keyword id="KW-0520">NAD</keyword>
<keyword id="KW-0808">Transferase</keyword>
<keyword id="KW-0862">Zinc</keyword>
<name>NPD_BACC1</name>
<accession>Q735N7</accession>
<organism>
    <name type="scientific">Bacillus cereus (strain ATCC 10987 / NRS 248)</name>
    <dbReference type="NCBI Taxonomy" id="222523"/>
    <lineage>
        <taxon>Bacteria</taxon>
        <taxon>Bacillati</taxon>
        <taxon>Bacillota</taxon>
        <taxon>Bacilli</taxon>
        <taxon>Bacillales</taxon>
        <taxon>Bacillaceae</taxon>
        <taxon>Bacillus</taxon>
        <taxon>Bacillus cereus group</taxon>
    </lineage>
</organism>
<feature type="chain" id="PRO_0000110288" description="NAD-dependent protein deacetylase">
    <location>
        <begin position="1"/>
        <end position="242"/>
    </location>
</feature>
<feature type="domain" description="Deacetylase sirtuin-type" evidence="2">
    <location>
        <begin position="1"/>
        <end position="242"/>
    </location>
</feature>
<feature type="active site" description="Proton acceptor" evidence="2">
    <location>
        <position position="120"/>
    </location>
</feature>
<feature type="binding site" evidence="1">
    <location>
        <position position="23"/>
    </location>
    <ligand>
        <name>NAD(+)</name>
        <dbReference type="ChEBI" id="CHEBI:57540"/>
    </ligand>
</feature>
<feature type="binding site" evidence="1">
    <location>
        <position position="27"/>
    </location>
    <ligand>
        <name>NAD(+)</name>
        <dbReference type="ChEBI" id="CHEBI:57540"/>
    </ligand>
</feature>
<feature type="binding site" evidence="1">
    <location>
        <position position="34"/>
    </location>
    <ligand>
        <name>NAD(+)</name>
        <dbReference type="ChEBI" id="CHEBI:57540"/>
    </ligand>
</feature>
<feature type="binding site" evidence="1">
    <location>
        <position position="34"/>
    </location>
    <ligand>
        <name>nicotinamide</name>
        <dbReference type="ChEBI" id="CHEBI:17154"/>
    </ligand>
</feature>
<feature type="binding site" evidence="1">
    <location>
        <position position="35"/>
    </location>
    <ligand>
        <name>NAD(+)</name>
        <dbReference type="ChEBI" id="CHEBI:57540"/>
    </ligand>
</feature>
<feature type="binding site" evidence="1">
    <location>
        <position position="102"/>
    </location>
    <ligand>
        <name>NAD(+)</name>
        <dbReference type="ChEBI" id="CHEBI:57540"/>
    </ligand>
</feature>
<feature type="binding site" evidence="1">
    <location>
        <position position="104"/>
    </location>
    <ligand>
        <name>NAD(+)</name>
        <dbReference type="ChEBI" id="CHEBI:57540"/>
    </ligand>
</feature>
<feature type="binding site" evidence="1">
    <location>
        <position position="104"/>
    </location>
    <ligand>
        <name>nicotinamide</name>
        <dbReference type="ChEBI" id="CHEBI:17154"/>
    </ligand>
</feature>
<feature type="binding site" evidence="1">
    <location>
        <position position="105"/>
    </location>
    <ligand>
        <name>NAD(+)</name>
        <dbReference type="ChEBI" id="CHEBI:57540"/>
    </ligand>
</feature>
<feature type="binding site" evidence="1">
    <location>
        <position position="105"/>
    </location>
    <ligand>
        <name>nicotinamide</name>
        <dbReference type="ChEBI" id="CHEBI:17154"/>
    </ligand>
</feature>
<feature type="binding site" evidence="1">
    <location>
        <position position="120"/>
    </location>
    <ligand>
        <name>NAD(+)</name>
        <dbReference type="ChEBI" id="CHEBI:57540"/>
    </ligand>
</feature>
<feature type="binding site" evidence="1">
    <location>
        <position position="128"/>
    </location>
    <ligand>
        <name>Zn(2+)</name>
        <dbReference type="ChEBI" id="CHEBI:29105"/>
    </ligand>
</feature>
<feature type="binding site" evidence="1">
    <location>
        <position position="131"/>
    </location>
    <ligand>
        <name>Zn(2+)</name>
        <dbReference type="ChEBI" id="CHEBI:29105"/>
    </ligand>
</feature>
<feature type="binding site" evidence="1">
    <location>
        <position position="148"/>
    </location>
    <ligand>
        <name>Zn(2+)</name>
        <dbReference type="ChEBI" id="CHEBI:29105"/>
    </ligand>
</feature>
<feature type="binding site" evidence="1">
    <location>
        <position position="151"/>
    </location>
    <ligand>
        <name>Zn(2+)</name>
        <dbReference type="ChEBI" id="CHEBI:29105"/>
    </ligand>
</feature>
<feature type="binding site" evidence="1">
    <location>
        <position position="187"/>
    </location>
    <ligand>
        <name>NAD(+)</name>
        <dbReference type="ChEBI" id="CHEBI:57540"/>
    </ligand>
</feature>
<feature type="binding site" evidence="1">
    <location>
        <position position="188"/>
    </location>
    <ligand>
        <name>NAD(+)</name>
        <dbReference type="ChEBI" id="CHEBI:57540"/>
    </ligand>
</feature>
<feature type="binding site" evidence="1">
    <location>
        <position position="213"/>
    </location>
    <ligand>
        <name>NAD(+)</name>
        <dbReference type="ChEBI" id="CHEBI:57540"/>
    </ligand>
</feature>
<feature type="binding site" evidence="1">
    <location>
        <position position="231"/>
    </location>
    <ligand>
        <name>NAD(+)</name>
        <dbReference type="ChEBI" id="CHEBI:57540"/>
    </ligand>
</feature>
<dbReference type="EC" id="2.3.1.286" evidence="1 2"/>
<dbReference type="EMBL" id="AE017194">
    <property type="protein sequence ID" value="AAS42025.1"/>
    <property type="molecule type" value="Genomic_DNA"/>
</dbReference>
<dbReference type="SMR" id="Q735N7"/>
<dbReference type="KEGG" id="bca:BCE_3115"/>
<dbReference type="HOGENOM" id="CLU_023643_3_0_9"/>
<dbReference type="Proteomes" id="UP000002527">
    <property type="component" value="Chromosome"/>
</dbReference>
<dbReference type="GO" id="GO:0005737">
    <property type="term" value="C:cytoplasm"/>
    <property type="evidence" value="ECO:0007669"/>
    <property type="project" value="UniProtKB-SubCell"/>
</dbReference>
<dbReference type="GO" id="GO:0017136">
    <property type="term" value="F:histone deacetylase activity, NAD-dependent"/>
    <property type="evidence" value="ECO:0007669"/>
    <property type="project" value="TreeGrafter"/>
</dbReference>
<dbReference type="GO" id="GO:0070403">
    <property type="term" value="F:NAD+ binding"/>
    <property type="evidence" value="ECO:0007669"/>
    <property type="project" value="UniProtKB-UniRule"/>
</dbReference>
<dbReference type="GO" id="GO:0008270">
    <property type="term" value="F:zinc ion binding"/>
    <property type="evidence" value="ECO:0007669"/>
    <property type="project" value="UniProtKB-UniRule"/>
</dbReference>
<dbReference type="CDD" id="cd01413">
    <property type="entry name" value="SIR2_Af2"/>
    <property type="match status" value="1"/>
</dbReference>
<dbReference type="Gene3D" id="3.30.1600.10">
    <property type="entry name" value="SIR2/SIRT2 'Small Domain"/>
    <property type="match status" value="1"/>
</dbReference>
<dbReference type="Gene3D" id="3.40.50.1220">
    <property type="entry name" value="TPP-binding domain"/>
    <property type="match status" value="1"/>
</dbReference>
<dbReference type="HAMAP" id="MF_01968">
    <property type="entry name" value="Sirtuin_ClassU"/>
    <property type="match status" value="1"/>
</dbReference>
<dbReference type="InterPro" id="IPR029035">
    <property type="entry name" value="DHS-like_NAD/FAD-binding_dom"/>
</dbReference>
<dbReference type="InterPro" id="IPR050134">
    <property type="entry name" value="NAD-dep_sirtuin_deacylases"/>
</dbReference>
<dbReference type="InterPro" id="IPR003000">
    <property type="entry name" value="Sirtuin"/>
</dbReference>
<dbReference type="InterPro" id="IPR026591">
    <property type="entry name" value="Sirtuin_cat_small_dom_sf"/>
</dbReference>
<dbReference type="InterPro" id="IPR028628">
    <property type="entry name" value="Sirtuin_class_U"/>
</dbReference>
<dbReference type="InterPro" id="IPR026590">
    <property type="entry name" value="Ssirtuin_cat_dom"/>
</dbReference>
<dbReference type="NCBIfam" id="NF001752">
    <property type="entry name" value="PRK00481.1-1"/>
    <property type="match status" value="1"/>
</dbReference>
<dbReference type="NCBIfam" id="NF001754">
    <property type="entry name" value="PRK00481.1-4"/>
    <property type="match status" value="1"/>
</dbReference>
<dbReference type="PANTHER" id="PTHR11085:SF4">
    <property type="entry name" value="NAD-DEPENDENT PROTEIN DEACYLASE"/>
    <property type="match status" value="1"/>
</dbReference>
<dbReference type="PANTHER" id="PTHR11085">
    <property type="entry name" value="NAD-DEPENDENT PROTEIN DEACYLASE SIRTUIN-5, MITOCHONDRIAL-RELATED"/>
    <property type="match status" value="1"/>
</dbReference>
<dbReference type="Pfam" id="PF02146">
    <property type="entry name" value="SIR2"/>
    <property type="match status" value="1"/>
</dbReference>
<dbReference type="SUPFAM" id="SSF52467">
    <property type="entry name" value="DHS-like NAD/FAD-binding domain"/>
    <property type="match status" value="1"/>
</dbReference>
<dbReference type="PROSITE" id="PS50305">
    <property type="entry name" value="SIRTUIN"/>
    <property type="match status" value="1"/>
</dbReference>
<evidence type="ECO:0000255" key="1">
    <source>
        <dbReference type="HAMAP-Rule" id="MF_01968"/>
    </source>
</evidence>
<evidence type="ECO:0000255" key="2">
    <source>
        <dbReference type="PROSITE-ProRule" id="PRU00236"/>
    </source>
</evidence>
<comment type="function">
    <text evidence="1">NAD-dependent protein deacetylase which modulates the activities of several enzymes which are inactive in their acetylated form.</text>
</comment>
<comment type="catalytic activity">
    <reaction evidence="1">
        <text>N(6)-acetyl-L-lysyl-[protein] + NAD(+) + H2O = 2''-O-acetyl-ADP-D-ribose + nicotinamide + L-lysyl-[protein]</text>
        <dbReference type="Rhea" id="RHEA:43636"/>
        <dbReference type="Rhea" id="RHEA-COMP:9752"/>
        <dbReference type="Rhea" id="RHEA-COMP:10731"/>
        <dbReference type="ChEBI" id="CHEBI:15377"/>
        <dbReference type="ChEBI" id="CHEBI:17154"/>
        <dbReference type="ChEBI" id="CHEBI:29969"/>
        <dbReference type="ChEBI" id="CHEBI:57540"/>
        <dbReference type="ChEBI" id="CHEBI:61930"/>
        <dbReference type="ChEBI" id="CHEBI:83767"/>
        <dbReference type="EC" id="2.3.1.286"/>
    </reaction>
</comment>
<comment type="cofactor">
    <cofactor evidence="1">
        <name>Zn(2+)</name>
        <dbReference type="ChEBI" id="CHEBI:29105"/>
    </cofactor>
    <text evidence="1">Binds 1 zinc ion per subunit.</text>
</comment>
<comment type="subcellular location">
    <subcellularLocation>
        <location evidence="1">Cytoplasm</location>
    </subcellularLocation>
</comment>
<comment type="similarity">
    <text evidence="1">Belongs to the sirtuin family. Class U subfamily.</text>
</comment>
<protein>
    <recommendedName>
        <fullName evidence="1">NAD-dependent protein deacetylase</fullName>
        <ecNumber evidence="1 2">2.3.1.286</ecNumber>
    </recommendedName>
    <alternativeName>
        <fullName evidence="1">Regulatory protein SIR2 homolog</fullName>
    </alternativeName>
</protein>
<sequence>MQQFEEVHSILEKAKKITVLTGAGASTESGIPDFRSANGLYADANVEMYLSRGYYNRSPKEFWKHYKEIFQINTFHQYKPNRGHRFLAELEEQGKDITILTQNIDGLHQLGGSKHVIDLHGTLQTAHCPKCKAGYDLQYMIDHEVPRCEKCNFILNPDVVLYGDTLPQYQNAVKRLYETDVLIVMGTSLKVQPVASFPQIAKREVGATTILVNEELTGQEYNFDYVFQNKIGEFVEGLSSRK</sequence>
<reference key="1">
    <citation type="journal article" date="2004" name="Nucleic Acids Res.">
        <title>The genome sequence of Bacillus cereus ATCC 10987 reveals metabolic adaptations and a large plasmid related to Bacillus anthracis pXO1.</title>
        <authorList>
            <person name="Rasko D.A."/>
            <person name="Ravel J."/>
            <person name="Oekstad O.A."/>
            <person name="Helgason E."/>
            <person name="Cer R.Z."/>
            <person name="Jiang L."/>
            <person name="Shores K.A."/>
            <person name="Fouts D.E."/>
            <person name="Tourasse N.J."/>
            <person name="Angiuoli S.V."/>
            <person name="Kolonay J.F."/>
            <person name="Nelson W.C."/>
            <person name="Kolstoe A.-B."/>
            <person name="Fraser C.M."/>
            <person name="Read T.D."/>
        </authorList>
    </citation>
    <scope>NUCLEOTIDE SEQUENCE [LARGE SCALE GENOMIC DNA]</scope>
    <source>
        <strain>ATCC 10987 / NRS 248</strain>
    </source>
</reference>
<gene>
    <name evidence="1" type="primary">cobB</name>
    <name type="ordered locus">BCE_3115</name>
</gene>